<protein>
    <recommendedName>
        <fullName evidence="7">Piperic acid--CoA ligase</fullName>
        <shortName evidence="7">PipCoA ligase</shortName>
        <ecNumber evidence="6">6.2.1.-</ecNumber>
    </recommendedName>
</protein>
<keyword id="KW-0067">ATP-binding</keyword>
<keyword id="KW-0436">Ligase</keyword>
<keyword id="KW-0547">Nucleotide-binding</keyword>
<keyword id="KW-0576">Peroxisome</keyword>
<sequence>MEKSGYGNDGIYRSLRPPVLFPNDPNLSVTSYLFQRSDAYPDRLALADANSGETLNFAQFKAMVQRVSHGLSRLGIKKGDVVLIFSPNSIYFPVCFLAIVALGAVVTTGNPQYTSAEITKQANDSKPKLVITVPQLWDKVNHLGLPAVFLGSKISGDGTIAPSNRNINGTVTYFSNLVELGGHVSEFPPVSIKRSDIAALLYSSGTSGTSKGVILTHRNLISTACMTTSDQEFDGEDPNVFLCFLPMSHVFGLVIICYSQLMRGNSVVSVEKFDLEMVLRSVGKYRVTYLCVVPPVMIALAKQNWGKIYDLSSLKRIICGSAPLGKEVIEECAKNYPHVPIIQGYGLTESCGIASLEIPEGVREYGSSGILFPAVEAKIVHVENLTPLPPNQLGEIWIRGPNMMQGYLNNPQATKLTIDEQGWVHTGDLGYFNGEGRLSVVDRIKELIKCKGFQVAPAELEGLLLSHQEILDAVVIPYPDAEAGEVPIAYVVRALSSTLDEEAVKKFIAEQVAPFKRLRKVTFVNSVPKSASGKILRRELIAKVRSKI</sequence>
<evidence type="ECO:0000250" key="1">
    <source>
        <dbReference type="UniProtKB" id="O24146"/>
    </source>
</evidence>
<evidence type="ECO:0000250" key="2">
    <source>
        <dbReference type="UniProtKB" id="Q42524"/>
    </source>
</evidence>
<evidence type="ECO:0000250" key="3">
    <source>
        <dbReference type="UniProtKB" id="Q81G39"/>
    </source>
</evidence>
<evidence type="ECO:0000250" key="4">
    <source>
        <dbReference type="UniProtKB" id="Q9M0X9"/>
    </source>
</evidence>
<evidence type="ECO:0000255" key="5"/>
<evidence type="ECO:0000269" key="6">
    <source>
    </source>
</evidence>
<evidence type="ECO:0000303" key="7">
    <source>
    </source>
</evidence>
<evidence type="ECO:0000305" key="8"/>
<evidence type="ECO:0000305" key="9">
    <source>
    </source>
</evidence>
<organism>
    <name type="scientific">Piper nigrum</name>
    <name type="common">Black pepper</name>
    <dbReference type="NCBI Taxonomy" id="13216"/>
    <lineage>
        <taxon>Eukaryota</taxon>
        <taxon>Viridiplantae</taxon>
        <taxon>Streptophyta</taxon>
        <taxon>Embryophyta</taxon>
        <taxon>Tracheophyta</taxon>
        <taxon>Spermatophyta</taxon>
        <taxon>Magnoliopsida</taxon>
        <taxon>Magnoliidae</taxon>
        <taxon>Piperales</taxon>
        <taxon>Piperaceae</taxon>
        <taxon>Piper</taxon>
    </lineage>
</organism>
<proteinExistence type="evidence at protein level"/>
<reference key="1">
    <citation type="journal article" date="2020" name="Plant J.">
        <title>A piperic acid CoA ligase produces a putative precursor of piperine, the pungent principle from black pepper fruits.</title>
        <authorList>
            <person name="Schnabel A."/>
            <person name="Cotinguiba F."/>
            <person name="Athmer B."/>
            <person name="Yang C."/>
            <person name="Westermann B."/>
            <person name="Schaks A."/>
            <person name="Porzel A."/>
            <person name="Brandt W."/>
            <person name="Schumacher F."/>
            <person name="Vogt T."/>
        </authorList>
    </citation>
    <scope>NUCLEOTIDE SEQUENCE [MRNA]</scope>
    <scope>FUNCTION</scope>
    <scope>DISRUPTION PHENOTYPE</scope>
    <scope>CATALYTIC ACTIVITY</scope>
    <scope>BIOPHYSICOCHEMICAL PROPERTIES</scope>
    <scope>TISSUE SPECIFICITY</scope>
    <scope>PATHWAY</scope>
    <scope>SUBUNIT</scope>
    <source>
        <tissue>Fruit</tissue>
    </source>
</reference>
<reference key="2">
    <citation type="journal article" date="2021" name="Phytother. Res.">
        <title>Piperine: A review of its biological effects.</title>
        <authorList>
            <person name="Haq I.U."/>
            <person name="Imran M."/>
            <person name="Nadeem M."/>
            <person name="Tufail T."/>
            <person name="Gondal T.A."/>
            <person name="Mubarak M.S."/>
        </authorList>
    </citation>
    <scope>REVIEW ON PIPERINE PHARMACOLOGICAL AND CULINARY USES</scope>
</reference>
<accession>A0A6B9HER0</accession>
<name>PIPCL_PIPNI</name>
<dbReference type="EC" id="6.2.1.-" evidence="6"/>
<dbReference type="EMBL" id="MN729603">
    <property type="protein sequence ID" value="QGY72664.1"/>
    <property type="molecule type" value="mRNA"/>
</dbReference>
<dbReference type="SMR" id="A0A6B9HER0"/>
<dbReference type="BioCyc" id="MetaCyc:MONOMER-124269"/>
<dbReference type="GO" id="GO:0005777">
    <property type="term" value="C:peroxisome"/>
    <property type="evidence" value="ECO:0007669"/>
    <property type="project" value="UniProtKB-SubCell"/>
</dbReference>
<dbReference type="GO" id="GO:0005524">
    <property type="term" value="F:ATP binding"/>
    <property type="evidence" value="ECO:0007669"/>
    <property type="project" value="UniProtKB-KW"/>
</dbReference>
<dbReference type="GO" id="GO:0016405">
    <property type="term" value="F:CoA-ligase activity"/>
    <property type="evidence" value="ECO:0000314"/>
    <property type="project" value="UniProtKB"/>
</dbReference>
<dbReference type="GO" id="GO:0004467">
    <property type="term" value="F:long-chain fatty acid-CoA ligase activity"/>
    <property type="evidence" value="ECO:0000314"/>
    <property type="project" value="UniProtKB"/>
</dbReference>
<dbReference type="CDD" id="cd05904">
    <property type="entry name" value="4CL"/>
    <property type="match status" value="1"/>
</dbReference>
<dbReference type="FunFam" id="3.30.300.30:FF:000007">
    <property type="entry name" value="4-coumarate--CoA ligase 2"/>
    <property type="match status" value="1"/>
</dbReference>
<dbReference type="FunFam" id="3.40.50.12780:FF:000003">
    <property type="entry name" value="Long-chain-fatty-acid--CoA ligase FadD"/>
    <property type="match status" value="1"/>
</dbReference>
<dbReference type="Gene3D" id="3.30.300.30">
    <property type="match status" value="1"/>
</dbReference>
<dbReference type="Gene3D" id="3.40.50.12780">
    <property type="entry name" value="N-terminal domain of ligase-like"/>
    <property type="match status" value="1"/>
</dbReference>
<dbReference type="InterPro" id="IPR025110">
    <property type="entry name" value="AMP-bd_C"/>
</dbReference>
<dbReference type="InterPro" id="IPR045851">
    <property type="entry name" value="AMP-bd_C_sf"/>
</dbReference>
<dbReference type="InterPro" id="IPR020845">
    <property type="entry name" value="AMP-binding_CS"/>
</dbReference>
<dbReference type="InterPro" id="IPR000873">
    <property type="entry name" value="AMP-dep_synth/lig_dom"/>
</dbReference>
<dbReference type="InterPro" id="IPR042099">
    <property type="entry name" value="ANL_N_sf"/>
</dbReference>
<dbReference type="PANTHER" id="PTHR24096:SF425">
    <property type="entry name" value="4-COUMARATE--COA LIGASE-LIKE 7"/>
    <property type="match status" value="1"/>
</dbReference>
<dbReference type="PANTHER" id="PTHR24096">
    <property type="entry name" value="LONG-CHAIN-FATTY-ACID--COA LIGASE"/>
    <property type="match status" value="1"/>
</dbReference>
<dbReference type="Pfam" id="PF00501">
    <property type="entry name" value="AMP-binding"/>
    <property type="match status" value="1"/>
</dbReference>
<dbReference type="Pfam" id="PF13193">
    <property type="entry name" value="AMP-binding_C"/>
    <property type="match status" value="1"/>
</dbReference>
<dbReference type="SUPFAM" id="SSF56801">
    <property type="entry name" value="Acetyl-CoA synthetase-like"/>
    <property type="match status" value="1"/>
</dbReference>
<dbReference type="PROSITE" id="PS00455">
    <property type="entry name" value="AMP_BINDING"/>
    <property type="match status" value="1"/>
</dbReference>
<feature type="chain" id="PRO_0000456904" description="Piperic acid--CoA ligase">
    <location>
        <begin position="1"/>
        <end position="548"/>
    </location>
</feature>
<feature type="region of interest" description="SBD1" evidence="2">
    <location>
        <begin position="274"/>
        <end position="343"/>
    </location>
</feature>
<feature type="region of interest" description="SBD2" evidence="2">
    <location>
        <begin position="344"/>
        <end position="407"/>
    </location>
</feature>
<feature type="short sequence motif" description="Microbody targeting signal" evidence="5">
    <location>
        <begin position="546"/>
        <end position="548"/>
    </location>
</feature>
<feature type="binding site" evidence="1">
    <location>
        <position position="203"/>
    </location>
    <ligand>
        <name>ATP</name>
        <dbReference type="ChEBI" id="CHEBI:30616"/>
    </ligand>
</feature>
<feature type="binding site" evidence="1">
    <location>
        <position position="204"/>
    </location>
    <ligand>
        <name>ATP</name>
        <dbReference type="ChEBI" id="CHEBI:30616"/>
    </ligand>
</feature>
<feature type="binding site" evidence="1">
    <location>
        <position position="205"/>
    </location>
    <ligand>
        <name>ATP</name>
        <dbReference type="ChEBI" id="CHEBI:30616"/>
    </ligand>
</feature>
<feature type="binding site" evidence="1">
    <location>
        <position position="206"/>
    </location>
    <ligand>
        <name>ATP</name>
        <dbReference type="ChEBI" id="CHEBI:30616"/>
    </ligand>
</feature>
<feature type="binding site" evidence="1">
    <location>
        <position position="207"/>
    </location>
    <ligand>
        <name>ATP</name>
        <dbReference type="ChEBI" id="CHEBI:30616"/>
    </ligand>
</feature>
<feature type="binding site" evidence="1">
    <location>
        <position position="211"/>
    </location>
    <ligand>
        <name>ATP</name>
        <dbReference type="ChEBI" id="CHEBI:30616"/>
    </ligand>
</feature>
<feature type="binding site" evidence="1">
    <location>
        <position position="272"/>
    </location>
    <ligand>
        <name>CoA</name>
        <dbReference type="ChEBI" id="CHEBI:57287"/>
    </ligand>
</feature>
<feature type="binding site" evidence="1">
    <location>
        <position position="343"/>
    </location>
    <ligand>
        <name>ATP</name>
        <dbReference type="ChEBI" id="CHEBI:30616"/>
    </ligand>
</feature>
<feature type="binding site" evidence="1">
    <location>
        <position position="344"/>
    </location>
    <ligand>
        <name>ATP</name>
        <dbReference type="ChEBI" id="CHEBI:30616"/>
    </ligand>
</feature>
<feature type="binding site" evidence="1">
    <location>
        <position position="348"/>
    </location>
    <ligand>
        <name>ATP</name>
        <dbReference type="ChEBI" id="CHEBI:30616"/>
    </ligand>
</feature>
<feature type="binding site" evidence="3">
    <location>
        <position position="428"/>
    </location>
    <ligand>
        <name>ATP</name>
        <dbReference type="ChEBI" id="CHEBI:30616"/>
    </ligand>
</feature>
<feature type="binding site" evidence="3">
    <location>
        <begin position="440"/>
        <end position="443"/>
    </location>
    <ligand>
        <name>ATP</name>
        <dbReference type="ChEBI" id="CHEBI:30616"/>
    </ligand>
</feature>
<feature type="binding site" evidence="1">
    <location>
        <position position="451"/>
    </location>
    <ligand>
        <name>CoA</name>
        <dbReference type="ChEBI" id="CHEBI:57287"/>
    </ligand>
</feature>
<feature type="binding site" evidence="1">
    <location>
        <position position="452"/>
    </location>
    <ligand>
        <name>CoA</name>
        <dbReference type="ChEBI" id="CHEBI:57287"/>
    </ligand>
</feature>
<feature type="binding site" evidence="3">
    <location>
        <position position="534"/>
    </location>
    <ligand>
        <name>ATP</name>
        <dbReference type="ChEBI" id="CHEBI:30616"/>
    </ligand>
</feature>
<comment type="function">
    <text evidence="6">Involved in the biosynthesis of aromatic piperamides natural products such as piperine (1-piperoyl-piperidine), the pungent principle contributing, together with several terpenoids, to the aromatic properties of black pepper fruits, and displaying numerous pharmacological activities such as antiproliferative, antitumor, antiangiogenesis, antioxidant, antidiabetic, antiobesity, cardioprotective, antimicrobial, antiaging, and immunomodulatory effects (PubMed:31837062). Acts as a carboxylate--CoA ligase that catalyzes exclusively the formation of piperoyl--CoA from piperic acid and CoA (PubMed:31837062). Can also use the synthetic substrate 5-phenylpentanoic acid to form the corresponding CoA ester (PubMed:31837062).</text>
</comment>
<comment type="catalytic activity">
    <reaction evidence="6">
        <text>a carboxylate + ATP + CoA = an acyl-CoA + AMP + diphosphate</text>
        <dbReference type="Rhea" id="RHEA:24336"/>
        <dbReference type="ChEBI" id="CHEBI:29067"/>
        <dbReference type="ChEBI" id="CHEBI:30616"/>
        <dbReference type="ChEBI" id="CHEBI:33019"/>
        <dbReference type="ChEBI" id="CHEBI:57287"/>
        <dbReference type="ChEBI" id="CHEBI:58342"/>
        <dbReference type="ChEBI" id="CHEBI:456215"/>
    </reaction>
    <physiologicalReaction direction="left-to-right" evidence="9">
        <dbReference type="Rhea" id="RHEA:24337"/>
    </physiologicalReaction>
</comment>
<comment type="catalytic activity">
    <reaction evidence="6">
        <text>(E,E)-piperate + ATP + CoA = (E,E)-piperoyl-CoA + AMP + diphosphate</text>
        <dbReference type="Rhea" id="RHEA:73571"/>
        <dbReference type="ChEBI" id="CHEBI:30616"/>
        <dbReference type="ChEBI" id="CHEBI:33019"/>
        <dbReference type="ChEBI" id="CHEBI:57287"/>
        <dbReference type="ChEBI" id="CHEBI:57325"/>
        <dbReference type="ChEBI" id="CHEBI:192831"/>
        <dbReference type="ChEBI" id="CHEBI:456215"/>
    </reaction>
    <physiologicalReaction direction="left-to-right" evidence="9">
        <dbReference type="Rhea" id="RHEA:73572"/>
    </physiologicalReaction>
</comment>
<comment type="catalytic activity">
    <reaction evidence="6">
        <text>(E,E)-piperate + ATP + H(+) = (E,E)-piperoyl-AMP + diphosphate</text>
        <dbReference type="Rhea" id="RHEA:73575"/>
        <dbReference type="ChEBI" id="CHEBI:15378"/>
        <dbReference type="ChEBI" id="CHEBI:30616"/>
        <dbReference type="ChEBI" id="CHEBI:33019"/>
        <dbReference type="ChEBI" id="CHEBI:192831"/>
        <dbReference type="ChEBI" id="CHEBI:192833"/>
    </reaction>
    <physiologicalReaction direction="left-to-right" evidence="9">
        <dbReference type="Rhea" id="RHEA:73576"/>
    </physiologicalReaction>
</comment>
<comment type="catalytic activity">
    <reaction evidence="6">
        <text>(E,E)-piperoyl-AMP + CoA = (E,E)-piperoyl-CoA + AMP + H(+)</text>
        <dbReference type="Rhea" id="RHEA:73579"/>
        <dbReference type="ChEBI" id="CHEBI:15378"/>
        <dbReference type="ChEBI" id="CHEBI:57287"/>
        <dbReference type="ChEBI" id="CHEBI:57325"/>
        <dbReference type="ChEBI" id="CHEBI:192833"/>
        <dbReference type="ChEBI" id="CHEBI:456215"/>
    </reaction>
    <physiologicalReaction direction="left-to-right" evidence="9">
        <dbReference type="Rhea" id="RHEA:73580"/>
    </physiologicalReaction>
</comment>
<comment type="cofactor">
    <cofactor evidence="1">
        <name>Mg(2+)</name>
        <dbReference type="ChEBI" id="CHEBI:18420"/>
    </cofactor>
</comment>
<comment type="biophysicochemical properties">
    <kinetics>
        <KM evidence="6">43.3 uM for piperic acid</KM>
        <KM evidence="6">24.3 uM for 5-phenylpentanoic acid</KM>
        <Vmax evidence="6">19.6 nmol/sec/mg enzyme with piperic acid as substrate</Vmax>
        <Vmax evidence="6">27.9 nmol/sec/mg enzyme with 5-phenylpentanoic acid as substrate</Vmax>
        <text evidence="6">kcat is 1.09 sec(-1) with piperic acid as substrate (PubMed:31837062). kcat is 4.17 sec(-1) with 5-phenylpentanoic acid as substrate (PubMed:31837062).</text>
    </kinetics>
</comment>
<comment type="pathway">
    <text evidence="6">Aromatic compound metabolism.</text>
</comment>
<comment type="subunit">
    <text evidence="6">Monomer.</text>
</comment>
<comment type="subcellular location">
    <subcellularLocation>
        <location evidence="4">Peroxisome</location>
    </subcellularLocation>
</comment>
<comment type="tissue specificity">
    <text evidence="6">Mostly expressed in immature green fruits, and, to a lower extent, in leaves and flowers.</text>
</comment>
<comment type="developmental stage">
    <text evidence="6">Highest levels observed in fruits 2 months post anthesis.</text>
</comment>
<comment type="disruption phenotype">
    <text evidence="6">Strongly reduced piperine content in fruits.</text>
</comment>
<comment type="similarity">
    <text evidence="8">Belongs to the ATP-dependent AMP-binding enzyme family.</text>
</comment>